<proteinExistence type="evidence at protein level"/>
<sequence>MDLNSASTVVLQVLTQATSQDTAVLKPAEEQLKQWETQPGFYSVLLNIFTNHTLDINVRWLAVLYFKHGIDRYWRRVAPHALSEEEKTTLRAGLITNFNEPINQIATQIAVLIAKVARLDCPRQWPELIPTLIESVKVQDDLRQHRALLTFYHVTKTLASKRLAADRKLFYDLASGIYNFACSLWNHHTDTFLQEVSSGNEAAILSSLERTLLSLKVLRKLTVNGFVEPHKNMEVMGFLHGIFERLKQFLECSRSIGTDNVCRDRLEKTIILFTKVLLDFLDQHPFSFTPLIQRSLEFSVSYVFTEVGEGVTFERFIVQCMNLIKMIVKNYAYKPSKNFEDSSPETLEAHKIKMAFFTYPTLTEICRRLVSHYFLLTEEELTMWEEDPEGFTVEETGGDSWKYSLRPCTEVLFIDIFHEYNQTLTPVLLEMMQTLQGPTNVEDMNALLIKDAVYNAVGLAAYELFDSVDFDQWFKNQLLPELQVIHNRYKPLRRRVIWLIGQWISVKFKSDLRPMLYEAICNLLQDQDLVVRIETATTLKLTVDDFEFRTDQFLPYLETMFTLLFQLLQQVTECDTKMHVLHVLSCVIERVNMQIRPYVGCLVQYLPLLWKQSEEHNMLRCAILTTLIHLVQGLGADSKNLYPFLLPVIQLSTDVSQPPHVYLLEDGLELWLVTLENSPCITPELLRIFQNMSPLLELSSENLRTCFKIINGYIFLSSTEFLQTYAVGLCQSFCELLKEITTEGQVQVLKVVENALKVNPILGPQMFQPILPYVFKGIIEGERYPVVMSTYLGVMGRVLLQNTSFFSSLLNEMAHKFNQEMDQLLGNMIEMWVDRMDNITQPERRKLSALALLSLLPSDNSVIQDKFCGIINISVEGLHDVMTEDPETGTYKDCMLMSHLEEPKVTEDEEPPTEQDKRKKMLALKDPVHTVSLQQFIYEKLKAQQEMLGEQGFQSLMETVDTEIVTQLQEFLQGF</sequence>
<accession>Q9UI26</accession>
<accession>A6NGJ5</accession>
<accession>B4DZ73</accession>
<accession>D3DW98</accession>
<accession>Q8N5R2</accession>
<accession>Q9NSJ6</accession>
<accession>Q9NVB1</accession>
<organism>
    <name type="scientific">Homo sapiens</name>
    <name type="common">Human</name>
    <dbReference type="NCBI Taxonomy" id="9606"/>
    <lineage>
        <taxon>Eukaryota</taxon>
        <taxon>Metazoa</taxon>
        <taxon>Chordata</taxon>
        <taxon>Craniata</taxon>
        <taxon>Vertebrata</taxon>
        <taxon>Euteleostomi</taxon>
        <taxon>Mammalia</taxon>
        <taxon>Eutheria</taxon>
        <taxon>Euarchontoglires</taxon>
        <taxon>Primates</taxon>
        <taxon>Haplorrhini</taxon>
        <taxon>Catarrhini</taxon>
        <taxon>Hominidae</taxon>
        <taxon>Homo</taxon>
    </lineage>
</organism>
<gene>
    <name type="primary">IPO11</name>
    <name type="synonym">RANBP11</name>
</gene>
<dbReference type="EMBL" id="AF111109">
    <property type="protein sequence ID" value="AAF21936.1"/>
    <property type="molecule type" value="mRNA"/>
</dbReference>
<dbReference type="EMBL" id="AK302781">
    <property type="protein sequence ID" value="BAG63985.1"/>
    <property type="molecule type" value="mRNA"/>
</dbReference>
<dbReference type="EMBL" id="AK001696">
    <property type="protein sequence ID" value="BAA91843.1"/>
    <property type="molecule type" value="mRNA"/>
</dbReference>
<dbReference type="EMBL" id="AC008859">
    <property type="status" value="NOT_ANNOTATED_CDS"/>
    <property type="molecule type" value="Genomic_DNA"/>
</dbReference>
<dbReference type="EMBL" id="CH471137">
    <property type="protein sequence ID" value="EAW51379.1"/>
    <property type="molecule type" value="Genomic_DNA"/>
</dbReference>
<dbReference type="EMBL" id="CH471137">
    <property type="protein sequence ID" value="EAW51380.1"/>
    <property type="molecule type" value="Genomic_DNA"/>
</dbReference>
<dbReference type="EMBL" id="BC031694">
    <property type="protein sequence ID" value="AAH31694.1"/>
    <property type="molecule type" value="mRNA"/>
</dbReference>
<dbReference type="EMBL" id="BC033776">
    <property type="protein sequence ID" value="AAH33776.1"/>
    <property type="molecule type" value="mRNA"/>
</dbReference>
<dbReference type="EMBL" id="AL162083">
    <property type="protein sequence ID" value="CAB82416.1"/>
    <property type="molecule type" value="mRNA"/>
</dbReference>
<dbReference type="CCDS" id="CCDS34167.1">
    <molecule id="Q9UI26-1"/>
</dbReference>
<dbReference type="CCDS" id="CCDS47217.1">
    <molecule id="Q9UI26-2"/>
</dbReference>
<dbReference type="PIR" id="T47185">
    <property type="entry name" value="T47185"/>
</dbReference>
<dbReference type="RefSeq" id="NP_001128251.1">
    <molecule id="Q9UI26-2"/>
    <property type="nucleotide sequence ID" value="NM_001134779.2"/>
</dbReference>
<dbReference type="RefSeq" id="NP_057422.3">
    <molecule id="Q9UI26-1"/>
    <property type="nucleotide sequence ID" value="NM_016338.4"/>
</dbReference>
<dbReference type="SMR" id="Q9UI26"/>
<dbReference type="BioGRID" id="119368">
    <property type="interactions" value="177"/>
</dbReference>
<dbReference type="CORUM" id="Q9UI26"/>
<dbReference type="FunCoup" id="Q9UI26">
    <property type="interactions" value="4363"/>
</dbReference>
<dbReference type="IntAct" id="Q9UI26">
    <property type="interactions" value="88"/>
</dbReference>
<dbReference type="MINT" id="Q9UI26"/>
<dbReference type="STRING" id="9606.ENSP00000386992"/>
<dbReference type="TCDB" id="1.I.1.1.3">
    <property type="family name" value="the nuclear pore complex (npc) family"/>
</dbReference>
<dbReference type="GlyGen" id="Q9UI26">
    <property type="glycosylation" value="2 sites, 1 N-linked glycan (1 site), 1 O-linked glycan (1 site)"/>
</dbReference>
<dbReference type="iPTMnet" id="Q9UI26"/>
<dbReference type="PhosphoSitePlus" id="Q9UI26"/>
<dbReference type="BioMuta" id="IPO11"/>
<dbReference type="DMDM" id="50401199"/>
<dbReference type="jPOST" id="Q9UI26"/>
<dbReference type="MassIVE" id="Q9UI26"/>
<dbReference type="PaxDb" id="9606-ENSP00000386992"/>
<dbReference type="PeptideAtlas" id="Q9UI26"/>
<dbReference type="ProteomicsDB" id="84457">
    <molecule id="Q9UI26-1"/>
</dbReference>
<dbReference type="ProteomicsDB" id="84458">
    <molecule id="Q9UI26-2"/>
</dbReference>
<dbReference type="Pumba" id="Q9UI26"/>
<dbReference type="Antibodypedia" id="23693">
    <property type="antibodies" value="208 antibodies from 26 providers"/>
</dbReference>
<dbReference type="DNASU" id="51194"/>
<dbReference type="Ensembl" id="ENST00000325324.11">
    <molecule id="Q9UI26-1"/>
    <property type="protein sequence ID" value="ENSP00000316651.6"/>
    <property type="gene ID" value="ENSG00000086200.17"/>
</dbReference>
<dbReference type="Ensembl" id="ENST00000409296.7">
    <molecule id="Q9UI26-2"/>
    <property type="protein sequence ID" value="ENSP00000386992.3"/>
    <property type="gene ID" value="ENSG00000086200.17"/>
</dbReference>
<dbReference type="GeneID" id="51194"/>
<dbReference type="KEGG" id="hsa:51194"/>
<dbReference type="MANE-Select" id="ENST00000325324.11">
    <property type="protein sequence ID" value="ENSP00000316651.6"/>
    <property type="RefSeq nucleotide sequence ID" value="NM_016338.5"/>
    <property type="RefSeq protein sequence ID" value="NP_057422.3"/>
</dbReference>
<dbReference type="UCSC" id="uc003jtc.4">
    <molecule id="Q9UI26-1"/>
    <property type="organism name" value="human"/>
</dbReference>
<dbReference type="AGR" id="HGNC:20628"/>
<dbReference type="CTD" id="51194"/>
<dbReference type="DisGeNET" id="51194"/>
<dbReference type="GeneCards" id="IPO11"/>
<dbReference type="HGNC" id="HGNC:20628">
    <property type="gene designation" value="IPO11"/>
</dbReference>
<dbReference type="HPA" id="ENSG00000086200">
    <property type="expression patterns" value="Low tissue specificity"/>
</dbReference>
<dbReference type="MIM" id="610889">
    <property type="type" value="gene"/>
</dbReference>
<dbReference type="neXtProt" id="NX_Q9UI26"/>
<dbReference type="OpenTargets" id="ENSG00000086200"/>
<dbReference type="PharmGKB" id="PA134936197"/>
<dbReference type="VEuPathDB" id="HostDB:ENSG00000086200"/>
<dbReference type="eggNOG" id="KOG1993">
    <property type="taxonomic scope" value="Eukaryota"/>
</dbReference>
<dbReference type="GeneTree" id="ENSGT00390000014071"/>
<dbReference type="HOGENOM" id="CLU_003886_0_0_1"/>
<dbReference type="InParanoid" id="Q9UI26"/>
<dbReference type="OMA" id="SFHYVFH"/>
<dbReference type="OrthoDB" id="361693at2759"/>
<dbReference type="PAN-GO" id="Q9UI26">
    <property type="GO annotations" value="3 GO annotations based on evolutionary models"/>
</dbReference>
<dbReference type="PhylomeDB" id="Q9UI26"/>
<dbReference type="TreeFam" id="TF324336"/>
<dbReference type="PathwayCommons" id="Q9UI26"/>
<dbReference type="SignaLink" id="Q9UI26"/>
<dbReference type="BioGRID-ORCS" id="51194">
    <property type="hits" value="709 hits in 1174 CRISPR screens"/>
</dbReference>
<dbReference type="ChiTaRS" id="IPO11">
    <property type="organism name" value="human"/>
</dbReference>
<dbReference type="GeneWiki" id="IPO11"/>
<dbReference type="GenomeRNAi" id="51194"/>
<dbReference type="Pharos" id="Q9UI26">
    <property type="development level" value="Tbio"/>
</dbReference>
<dbReference type="PRO" id="PR:Q9UI26"/>
<dbReference type="Proteomes" id="UP000005640">
    <property type="component" value="Chromosome 5"/>
</dbReference>
<dbReference type="RNAct" id="Q9UI26">
    <property type="molecule type" value="protein"/>
</dbReference>
<dbReference type="Bgee" id="ENSG00000086200">
    <property type="expression patterns" value="Expressed in primordial germ cell in gonad and 174 other cell types or tissues"/>
</dbReference>
<dbReference type="ExpressionAtlas" id="Q9UI26">
    <property type="expression patterns" value="baseline and differential"/>
</dbReference>
<dbReference type="GO" id="GO:0005829">
    <property type="term" value="C:cytosol"/>
    <property type="evidence" value="ECO:0000314"/>
    <property type="project" value="HPA"/>
</dbReference>
<dbReference type="GO" id="GO:0005635">
    <property type="term" value="C:nuclear envelope"/>
    <property type="evidence" value="ECO:0000318"/>
    <property type="project" value="GO_Central"/>
</dbReference>
<dbReference type="GO" id="GO:0005654">
    <property type="term" value="C:nucleoplasm"/>
    <property type="evidence" value="ECO:0000314"/>
    <property type="project" value="HPA"/>
</dbReference>
<dbReference type="GO" id="GO:0061608">
    <property type="term" value="F:nuclear import signal receptor activity"/>
    <property type="evidence" value="ECO:0007669"/>
    <property type="project" value="Ensembl"/>
</dbReference>
<dbReference type="GO" id="GO:0031267">
    <property type="term" value="F:small GTPase binding"/>
    <property type="evidence" value="ECO:0007669"/>
    <property type="project" value="InterPro"/>
</dbReference>
<dbReference type="GO" id="GO:0006606">
    <property type="term" value="P:protein import into nucleus"/>
    <property type="evidence" value="ECO:0000318"/>
    <property type="project" value="GO_Central"/>
</dbReference>
<dbReference type="GO" id="GO:0006610">
    <property type="term" value="P:ribosomal protein import into nucleus"/>
    <property type="evidence" value="ECO:0007669"/>
    <property type="project" value="Ensembl"/>
</dbReference>
<dbReference type="FunFam" id="1.25.10.10:FF:000116">
    <property type="entry name" value="importin-11 isoform X1"/>
    <property type="match status" value="1"/>
</dbReference>
<dbReference type="Gene3D" id="1.25.10.10">
    <property type="entry name" value="Leucine-rich Repeat Variant"/>
    <property type="match status" value="1"/>
</dbReference>
<dbReference type="InterPro" id="IPR011989">
    <property type="entry name" value="ARM-like"/>
</dbReference>
<dbReference type="InterPro" id="IPR016024">
    <property type="entry name" value="ARM-type_fold"/>
</dbReference>
<dbReference type="InterPro" id="IPR001494">
    <property type="entry name" value="Importin-beta_N"/>
</dbReference>
<dbReference type="PANTHER" id="PTHR10997:SF7">
    <property type="entry name" value="IMPORTIN-11"/>
    <property type="match status" value="1"/>
</dbReference>
<dbReference type="PANTHER" id="PTHR10997">
    <property type="entry name" value="IMPORTIN-7, 8, 11"/>
    <property type="match status" value="1"/>
</dbReference>
<dbReference type="Pfam" id="PF03810">
    <property type="entry name" value="IBN_N"/>
    <property type="match status" value="1"/>
</dbReference>
<dbReference type="SMART" id="SM00913">
    <property type="entry name" value="IBN_N"/>
    <property type="match status" value="1"/>
</dbReference>
<dbReference type="SUPFAM" id="SSF48371">
    <property type="entry name" value="ARM repeat"/>
    <property type="match status" value="1"/>
</dbReference>
<dbReference type="PROSITE" id="PS50166">
    <property type="entry name" value="IMPORTIN_B_NT"/>
    <property type="match status" value="1"/>
</dbReference>
<reference key="1">
    <citation type="submission" date="1998-12" db="EMBL/GenBank/DDBJ databases">
        <title>Human RanBP11.</title>
        <authorList>
            <person name="Goerlich D."/>
            <person name="Prehn S."/>
            <person name="Hartmann E."/>
        </authorList>
    </citation>
    <scope>NUCLEOTIDE SEQUENCE [MRNA] (ISOFORM 1)</scope>
</reference>
<reference key="2">
    <citation type="journal article" date="2004" name="Nat. Genet.">
        <title>Complete sequencing and characterization of 21,243 full-length human cDNAs.</title>
        <authorList>
            <person name="Ota T."/>
            <person name="Suzuki Y."/>
            <person name="Nishikawa T."/>
            <person name="Otsuki T."/>
            <person name="Sugiyama T."/>
            <person name="Irie R."/>
            <person name="Wakamatsu A."/>
            <person name="Hayashi K."/>
            <person name="Sato H."/>
            <person name="Nagai K."/>
            <person name="Kimura K."/>
            <person name="Makita H."/>
            <person name="Sekine M."/>
            <person name="Obayashi M."/>
            <person name="Nishi T."/>
            <person name="Shibahara T."/>
            <person name="Tanaka T."/>
            <person name="Ishii S."/>
            <person name="Yamamoto J."/>
            <person name="Saito K."/>
            <person name="Kawai Y."/>
            <person name="Isono Y."/>
            <person name="Nakamura Y."/>
            <person name="Nagahari K."/>
            <person name="Murakami K."/>
            <person name="Yasuda T."/>
            <person name="Iwayanagi T."/>
            <person name="Wagatsuma M."/>
            <person name="Shiratori A."/>
            <person name="Sudo H."/>
            <person name="Hosoiri T."/>
            <person name="Kaku Y."/>
            <person name="Kodaira H."/>
            <person name="Kondo H."/>
            <person name="Sugawara M."/>
            <person name="Takahashi M."/>
            <person name="Kanda K."/>
            <person name="Yokoi T."/>
            <person name="Furuya T."/>
            <person name="Kikkawa E."/>
            <person name="Omura Y."/>
            <person name="Abe K."/>
            <person name="Kamihara K."/>
            <person name="Katsuta N."/>
            <person name="Sato K."/>
            <person name="Tanikawa M."/>
            <person name="Yamazaki M."/>
            <person name="Ninomiya K."/>
            <person name="Ishibashi T."/>
            <person name="Yamashita H."/>
            <person name="Murakawa K."/>
            <person name="Fujimori K."/>
            <person name="Tanai H."/>
            <person name="Kimata M."/>
            <person name="Watanabe M."/>
            <person name="Hiraoka S."/>
            <person name="Chiba Y."/>
            <person name="Ishida S."/>
            <person name="Ono Y."/>
            <person name="Takiguchi S."/>
            <person name="Watanabe S."/>
            <person name="Yosida M."/>
            <person name="Hotuta T."/>
            <person name="Kusano J."/>
            <person name="Kanehori K."/>
            <person name="Takahashi-Fujii A."/>
            <person name="Hara H."/>
            <person name="Tanase T.-O."/>
            <person name="Nomura Y."/>
            <person name="Togiya S."/>
            <person name="Komai F."/>
            <person name="Hara R."/>
            <person name="Takeuchi K."/>
            <person name="Arita M."/>
            <person name="Imose N."/>
            <person name="Musashino K."/>
            <person name="Yuuki H."/>
            <person name="Oshima A."/>
            <person name="Sasaki N."/>
            <person name="Aotsuka S."/>
            <person name="Yoshikawa Y."/>
            <person name="Matsunawa H."/>
            <person name="Ichihara T."/>
            <person name="Shiohata N."/>
            <person name="Sano S."/>
            <person name="Moriya S."/>
            <person name="Momiyama H."/>
            <person name="Satoh N."/>
            <person name="Takami S."/>
            <person name="Terashima Y."/>
            <person name="Suzuki O."/>
            <person name="Nakagawa S."/>
            <person name="Senoh A."/>
            <person name="Mizoguchi H."/>
            <person name="Goto Y."/>
            <person name="Shimizu F."/>
            <person name="Wakebe H."/>
            <person name="Hishigaki H."/>
            <person name="Watanabe T."/>
            <person name="Sugiyama A."/>
            <person name="Takemoto M."/>
            <person name="Kawakami B."/>
            <person name="Yamazaki M."/>
            <person name="Watanabe K."/>
            <person name="Kumagai A."/>
            <person name="Itakura S."/>
            <person name="Fukuzumi Y."/>
            <person name="Fujimori Y."/>
            <person name="Komiyama M."/>
            <person name="Tashiro H."/>
            <person name="Tanigami A."/>
            <person name="Fujiwara T."/>
            <person name="Ono T."/>
            <person name="Yamada K."/>
            <person name="Fujii Y."/>
            <person name="Ozaki K."/>
            <person name="Hirao M."/>
            <person name="Ohmori Y."/>
            <person name="Kawabata A."/>
            <person name="Hikiji T."/>
            <person name="Kobatake N."/>
            <person name="Inagaki H."/>
            <person name="Ikema Y."/>
            <person name="Okamoto S."/>
            <person name="Okitani R."/>
            <person name="Kawakami T."/>
            <person name="Noguchi S."/>
            <person name="Itoh T."/>
            <person name="Shigeta K."/>
            <person name="Senba T."/>
            <person name="Matsumura K."/>
            <person name="Nakajima Y."/>
            <person name="Mizuno T."/>
            <person name="Morinaga M."/>
            <person name="Sasaki M."/>
            <person name="Togashi T."/>
            <person name="Oyama M."/>
            <person name="Hata H."/>
            <person name="Watanabe M."/>
            <person name="Komatsu T."/>
            <person name="Mizushima-Sugano J."/>
            <person name="Satoh T."/>
            <person name="Shirai Y."/>
            <person name="Takahashi Y."/>
            <person name="Nakagawa K."/>
            <person name="Okumura K."/>
            <person name="Nagase T."/>
            <person name="Nomura N."/>
            <person name="Kikuchi H."/>
            <person name="Masuho Y."/>
            <person name="Yamashita R."/>
            <person name="Nakai K."/>
            <person name="Yada T."/>
            <person name="Nakamura Y."/>
            <person name="Ohara O."/>
            <person name="Isogai T."/>
            <person name="Sugano S."/>
        </authorList>
    </citation>
    <scope>NUCLEOTIDE SEQUENCE [LARGE SCALE MRNA] (ISOFORMS 1 AND 2)</scope>
    <source>
        <tissue>Testis</tissue>
    </source>
</reference>
<reference key="3">
    <citation type="journal article" date="2004" name="Nature">
        <title>The DNA sequence and comparative analysis of human chromosome 5.</title>
        <authorList>
            <person name="Schmutz J."/>
            <person name="Martin J."/>
            <person name="Terry A."/>
            <person name="Couronne O."/>
            <person name="Grimwood J."/>
            <person name="Lowry S."/>
            <person name="Gordon L.A."/>
            <person name="Scott D."/>
            <person name="Xie G."/>
            <person name="Huang W."/>
            <person name="Hellsten U."/>
            <person name="Tran-Gyamfi M."/>
            <person name="She X."/>
            <person name="Prabhakar S."/>
            <person name="Aerts A."/>
            <person name="Altherr M."/>
            <person name="Bajorek E."/>
            <person name="Black S."/>
            <person name="Branscomb E."/>
            <person name="Caoile C."/>
            <person name="Challacombe J.F."/>
            <person name="Chan Y.M."/>
            <person name="Denys M."/>
            <person name="Detter J.C."/>
            <person name="Escobar J."/>
            <person name="Flowers D."/>
            <person name="Fotopulos D."/>
            <person name="Glavina T."/>
            <person name="Gomez M."/>
            <person name="Gonzales E."/>
            <person name="Goodstein D."/>
            <person name="Grigoriev I."/>
            <person name="Groza M."/>
            <person name="Hammon N."/>
            <person name="Hawkins T."/>
            <person name="Haydu L."/>
            <person name="Israni S."/>
            <person name="Jett J."/>
            <person name="Kadner K."/>
            <person name="Kimball H."/>
            <person name="Kobayashi A."/>
            <person name="Lopez F."/>
            <person name="Lou Y."/>
            <person name="Martinez D."/>
            <person name="Medina C."/>
            <person name="Morgan J."/>
            <person name="Nandkeshwar R."/>
            <person name="Noonan J.P."/>
            <person name="Pitluck S."/>
            <person name="Pollard M."/>
            <person name="Predki P."/>
            <person name="Priest J."/>
            <person name="Ramirez L."/>
            <person name="Retterer J."/>
            <person name="Rodriguez A."/>
            <person name="Rogers S."/>
            <person name="Salamov A."/>
            <person name="Salazar A."/>
            <person name="Thayer N."/>
            <person name="Tice H."/>
            <person name="Tsai M."/>
            <person name="Ustaszewska A."/>
            <person name="Vo N."/>
            <person name="Wheeler J."/>
            <person name="Wu K."/>
            <person name="Yang J."/>
            <person name="Dickson M."/>
            <person name="Cheng J.-F."/>
            <person name="Eichler E.E."/>
            <person name="Olsen A."/>
            <person name="Pennacchio L.A."/>
            <person name="Rokhsar D.S."/>
            <person name="Richardson P."/>
            <person name="Lucas S.M."/>
            <person name="Myers R.M."/>
            <person name="Rubin E.M."/>
        </authorList>
    </citation>
    <scope>NUCLEOTIDE SEQUENCE [LARGE SCALE GENOMIC DNA]</scope>
</reference>
<reference key="4">
    <citation type="submission" date="2005-09" db="EMBL/GenBank/DDBJ databases">
        <authorList>
            <person name="Mural R.J."/>
            <person name="Istrail S."/>
            <person name="Sutton G.G."/>
            <person name="Florea L."/>
            <person name="Halpern A.L."/>
            <person name="Mobarry C.M."/>
            <person name="Lippert R."/>
            <person name="Walenz B."/>
            <person name="Shatkay H."/>
            <person name="Dew I."/>
            <person name="Miller J.R."/>
            <person name="Flanigan M.J."/>
            <person name="Edwards N.J."/>
            <person name="Bolanos R."/>
            <person name="Fasulo D."/>
            <person name="Halldorsson B.V."/>
            <person name="Hannenhalli S."/>
            <person name="Turner R."/>
            <person name="Yooseph S."/>
            <person name="Lu F."/>
            <person name="Nusskern D.R."/>
            <person name="Shue B.C."/>
            <person name="Zheng X.H."/>
            <person name="Zhong F."/>
            <person name="Delcher A.L."/>
            <person name="Huson D.H."/>
            <person name="Kravitz S.A."/>
            <person name="Mouchard L."/>
            <person name="Reinert K."/>
            <person name="Remington K.A."/>
            <person name="Clark A.G."/>
            <person name="Waterman M.S."/>
            <person name="Eichler E.E."/>
            <person name="Adams M.D."/>
            <person name="Hunkapiller M.W."/>
            <person name="Myers E.W."/>
            <person name="Venter J.C."/>
        </authorList>
    </citation>
    <scope>NUCLEOTIDE SEQUENCE [LARGE SCALE GENOMIC DNA]</scope>
</reference>
<reference key="5">
    <citation type="journal article" date="2004" name="Genome Res.">
        <title>The status, quality, and expansion of the NIH full-length cDNA project: the Mammalian Gene Collection (MGC).</title>
        <authorList>
            <consortium name="The MGC Project Team"/>
        </authorList>
    </citation>
    <scope>NUCLEOTIDE SEQUENCE [LARGE SCALE MRNA] (ISOFORM 1)</scope>
    <source>
        <tissue>Cervix</tissue>
        <tissue>Testis</tissue>
    </source>
</reference>
<reference key="6">
    <citation type="journal article" date="2007" name="BMC Genomics">
        <title>The full-ORF clone resource of the German cDNA consortium.</title>
        <authorList>
            <person name="Bechtel S."/>
            <person name="Rosenfelder H."/>
            <person name="Duda A."/>
            <person name="Schmidt C.P."/>
            <person name="Ernst U."/>
            <person name="Wellenreuther R."/>
            <person name="Mehrle A."/>
            <person name="Schuster C."/>
            <person name="Bahr A."/>
            <person name="Bloecker H."/>
            <person name="Heubner D."/>
            <person name="Hoerlein A."/>
            <person name="Michel G."/>
            <person name="Wedler H."/>
            <person name="Koehrer K."/>
            <person name="Ottenwaelder B."/>
            <person name="Poustka A."/>
            <person name="Wiemann S."/>
            <person name="Schupp I."/>
        </authorList>
    </citation>
    <scope>NUCLEOTIDE SEQUENCE [LARGE SCALE MRNA] OF 816-975 (ISOFORMS 1/2)</scope>
    <source>
        <tissue>Testis</tissue>
    </source>
</reference>
<reference key="7">
    <citation type="journal article" date="2000" name="EMBO J.">
        <title>Importin-11, a nuclear import receptor for the ubiquitin-conjugating enzyme, UbcM2.</title>
        <authorList>
            <person name="Plafker S.M."/>
            <person name="Macara I.G."/>
        </authorList>
    </citation>
    <scope>FUNCTION</scope>
    <scope>SUBCELLULAR LOCATION</scope>
    <scope>TISSUE SPECIFICITY</scope>
    <scope>INTERACTION WITH UBE2E3</scope>
</reference>
<reference key="8">
    <citation type="journal article" date="2009" name="Anal. Chem.">
        <title>Lys-N and trypsin cover complementary parts of the phosphoproteome in a refined SCX-based approach.</title>
        <authorList>
            <person name="Gauci S."/>
            <person name="Helbig A.O."/>
            <person name="Slijper M."/>
            <person name="Krijgsveld J."/>
            <person name="Heck A.J."/>
            <person name="Mohammed S."/>
        </authorList>
    </citation>
    <scope>ACETYLATION [LARGE SCALE ANALYSIS] AT MET-1</scope>
    <scope>IDENTIFICATION BY MASS SPECTROMETRY [LARGE SCALE ANALYSIS]</scope>
</reference>
<reference key="9">
    <citation type="journal article" date="2011" name="BMC Syst. Biol.">
        <title>Initial characterization of the human central proteome.</title>
        <authorList>
            <person name="Burkard T.R."/>
            <person name="Planyavsky M."/>
            <person name="Kaupe I."/>
            <person name="Breitwieser F.P."/>
            <person name="Buerckstuemmer T."/>
            <person name="Bennett K.L."/>
            <person name="Superti-Furga G."/>
            <person name="Colinge J."/>
        </authorList>
    </citation>
    <scope>IDENTIFICATION BY MASS SPECTROMETRY [LARGE SCALE ANALYSIS]</scope>
</reference>
<reference key="10">
    <citation type="journal article" date="2013" name="J. Proteome Res.">
        <title>Toward a comprehensive characterization of a human cancer cell phosphoproteome.</title>
        <authorList>
            <person name="Zhou H."/>
            <person name="Di Palma S."/>
            <person name="Preisinger C."/>
            <person name="Peng M."/>
            <person name="Polat A.N."/>
            <person name="Heck A.J."/>
            <person name="Mohammed S."/>
        </authorList>
    </citation>
    <scope>PHOSPHORYLATION [LARGE SCALE ANALYSIS] AT SER-343</scope>
    <scope>IDENTIFICATION BY MASS SPECTROMETRY [LARGE SCALE ANALYSIS]</scope>
    <source>
        <tissue>Cervix carcinoma</tissue>
    </source>
</reference>
<name>IPO11_HUMAN</name>
<keyword id="KW-0007">Acetylation</keyword>
<keyword id="KW-0025">Alternative splicing</keyword>
<keyword id="KW-0963">Cytoplasm</keyword>
<keyword id="KW-0539">Nucleus</keyword>
<keyword id="KW-0597">Phosphoprotein</keyword>
<keyword id="KW-0653">Protein transport</keyword>
<keyword id="KW-1267">Proteomics identification</keyword>
<keyword id="KW-1185">Reference proteome</keyword>
<keyword id="KW-0677">Repeat</keyword>
<keyword id="KW-0813">Transport</keyword>
<evidence type="ECO:0000250" key="1"/>
<evidence type="ECO:0000255" key="2">
    <source>
        <dbReference type="PROSITE-ProRule" id="PRU00115"/>
    </source>
</evidence>
<evidence type="ECO:0000269" key="3">
    <source>
    </source>
</evidence>
<evidence type="ECO:0000303" key="4">
    <source>
    </source>
</evidence>
<evidence type="ECO:0000305" key="5"/>
<evidence type="ECO:0007744" key="6">
    <source>
    </source>
</evidence>
<evidence type="ECO:0007744" key="7">
    <source>
    </source>
</evidence>
<comment type="function">
    <text evidence="1 3">Functions in nuclear protein import as nuclear transport receptor. Serves as receptor for nuclear localization signals (NLS) in cargo substrates. Is thought to mediate docking of the importin/substrate complex to the nuclear pore complex (NPC) through binding to nucleoporin and the complex is subsequently translocated through the pore by an energy requiring, Ran-dependent mechanism. At the nucleoplasmic side of the NPC, Ran binds to the importin, the importin/substrate complex dissociates and importin is re-exported from the nucleus to the cytoplasm where GTP hydrolysis releases Ran. The directionality of nuclear import is thought to be conferred by an asymmetric distribution of the GTP- and GDP-bound forms of Ran between the cytoplasm and nucleus (By similarity). Mediates the nuclear import of UBE2E3, and of RPL12 (By similarity).</text>
</comment>
<comment type="subunit">
    <text evidence="3">Interacts with UBE2E3 and RPL12.</text>
</comment>
<comment type="interaction">
    <interactant intactId="EBI-748752">
        <id>Q9UI26</id>
    </interactant>
    <interactant intactId="EBI-750709">
        <id>P35613</id>
        <label>BSG</label>
    </interactant>
    <organismsDiffer>false</organismsDiffer>
    <experiments>3</experiments>
</comment>
<comment type="interaction">
    <interactant intactId="EBI-748752">
        <id>Q9UI26</id>
    </interactant>
    <interactant intactId="EBI-946029">
        <id>Q6P1W5</id>
        <label>C1orf94</label>
    </interactant>
    <organismsDiffer>false</organismsDiffer>
    <experiments>3</experiments>
</comment>
<comment type="interaction">
    <interactant intactId="EBI-748752">
        <id>Q9UI26</id>
    </interactant>
    <interactant intactId="EBI-351962">
        <id>P17844</id>
        <label>DDX5</label>
    </interactant>
    <organismsDiffer>false</organismsDiffer>
    <experiments>2</experiments>
</comment>
<comment type="interaction">
    <interactant intactId="EBI-748752">
        <id>Q9UI26</id>
    </interactant>
    <interactant intactId="EBI-73473">
        <id>Q14240</id>
        <label>EIF4A2</label>
    </interactant>
    <organismsDiffer>false</organismsDiffer>
    <experiments>3</experiments>
</comment>
<comment type="interaction">
    <interactant intactId="EBI-12200335">
        <id>Q9UI26-2</id>
    </interactant>
    <interactant intactId="EBI-2952745">
        <id>Q01546</id>
        <label>KRT76</label>
    </interactant>
    <organismsDiffer>false</organismsDiffer>
    <experiments>3</experiments>
</comment>
<comment type="subcellular location">
    <subcellularLocation>
        <location evidence="3">Cytoplasm</location>
    </subcellularLocation>
    <subcellularLocation>
        <location evidence="3">Nucleus</location>
    </subcellularLocation>
</comment>
<comment type="alternative products">
    <event type="alternative splicing"/>
    <isoform>
        <id>Q9UI26-1</id>
        <name>1</name>
        <sequence type="displayed"/>
    </isoform>
    <isoform>
        <id>Q9UI26-2</id>
        <name>2</name>
        <sequence type="described" ref="VSP_041420"/>
    </isoform>
</comment>
<comment type="similarity">
    <text evidence="5">Belongs to the importin beta family.</text>
</comment>
<protein>
    <recommendedName>
        <fullName>Importin-11</fullName>
        <shortName>Imp11</shortName>
    </recommendedName>
    <alternativeName>
        <fullName>Ran-binding protein 11</fullName>
        <shortName>RanBP11</shortName>
    </alternativeName>
</protein>
<feature type="chain" id="PRO_0000120756" description="Importin-11">
    <location>
        <begin position="1"/>
        <end position="975"/>
    </location>
</feature>
<feature type="domain" description="Importin N-terminal" evidence="2">
    <location>
        <begin position="28"/>
        <end position="100"/>
    </location>
</feature>
<feature type="repeat" description="HEAT 1">
    <location>
        <begin position="123"/>
        <end position="160"/>
    </location>
</feature>
<feature type="repeat" description="HEAT 2">
    <location>
        <begin position="209"/>
        <end position="248"/>
    </location>
</feature>
<feature type="repeat" description="HEAT 3">
    <location>
        <begin position="318"/>
        <end position="356"/>
    </location>
</feature>
<feature type="repeat" description="HEAT 4">
    <location>
        <begin position="422"/>
        <end position="459"/>
    </location>
</feature>
<feature type="repeat" description="HEAT 5">
    <location>
        <begin position="473"/>
        <end position="509"/>
    </location>
</feature>
<feature type="repeat" description="HEAT 6">
    <location>
        <begin position="511"/>
        <end position="548"/>
    </location>
</feature>
<feature type="repeat" description="HEAT 7">
    <location>
        <begin position="555"/>
        <end position="593"/>
    </location>
</feature>
<feature type="repeat" description="HEAT 8">
    <location>
        <begin position="600"/>
        <end position="636"/>
    </location>
</feature>
<feature type="repeat" description="HEAT 9">
    <location>
        <begin position="640"/>
        <end position="677"/>
    </location>
</feature>
<feature type="repeat" description="HEAT 10">
    <location>
        <begin position="683"/>
        <end position="720"/>
    </location>
</feature>
<feature type="repeat" description="HEAT 11">
    <location>
        <begin position="743"/>
        <end position="764"/>
    </location>
</feature>
<feature type="repeat" description="HEAT 12">
    <location>
        <begin position="765"/>
        <end position="804"/>
    </location>
</feature>
<feature type="repeat" description="HEAT 13">
    <location>
        <begin position="819"/>
        <end position="849"/>
    </location>
</feature>
<feature type="repeat" description="HEAT 14">
    <location>
        <begin position="850"/>
        <end position="887"/>
    </location>
</feature>
<feature type="repeat" description="HEAT 15">
    <location>
        <begin position="957"/>
        <end position="974"/>
    </location>
</feature>
<feature type="modified residue" description="N-acetylmethionine" evidence="6">
    <location>
        <position position="1"/>
    </location>
</feature>
<feature type="modified residue" description="Phosphoserine" evidence="7">
    <location>
        <position position="343"/>
    </location>
</feature>
<feature type="splice variant" id="VSP_041420" description="In isoform 2." evidence="4">
    <original>M</original>
    <variation>MVQPIIHLGYVVYSLLYLGYKPVQHVTALNTVSSCHKMVSM</variation>
    <location>
        <position position="1"/>
    </location>
</feature>
<feature type="sequence variant" id="VAR_050004" description="In dbSNP:rs35107530.">
    <original>N</original>
    <variation>D</variation>
    <location>
        <position position="260"/>
    </location>
</feature>
<feature type="sequence variant" id="VAR_050005" description="In dbSNP:rs11544795.">
    <original>I</original>
    <variation>V</variation>
    <location>
        <position position="937"/>
    </location>
</feature>
<feature type="sequence conflict" description="In Ref. 2; BAG63985." evidence="5" ref="2">
    <original>T</original>
    <variation>A</variation>
    <location>
        <position position="53"/>
    </location>
</feature>
<feature type="sequence conflict" description="In Ref. 2; BAA91843." evidence="5" ref="2">
    <original>I</original>
    <variation>T</variation>
    <location>
        <position position="204"/>
    </location>
</feature>
<feature type="sequence conflict" description="In Ref. 2; BAG63985." evidence="5" ref="2">
    <original>G</original>
    <variation>V</variation>
    <location>
        <position position="237"/>
    </location>
</feature>
<feature type="sequence conflict" description="In Ref. 2; BAG63985." evidence="5" ref="2">
    <original>A</original>
    <variation>T</variation>
    <location>
        <position position="332"/>
    </location>
</feature>
<feature type="sequence conflict" description="In Ref. 2; BAA91843." evidence="5" ref="2">
    <original>I</original>
    <variation>V</variation>
    <location>
        <position position="504"/>
    </location>
</feature>
<feature type="sequence conflict" description="In Ref. 2; BAA91843." evidence="5" ref="2">
    <original>V</original>
    <variation>A</variation>
    <location>
        <position position="571"/>
    </location>
</feature>
<feature type="sequence conflict" description="In Ref. 2; BAG63985." evidence="5" ref="2">
    <original>L</original>
    <variation>S</variation>
    <location>
        <position position="722"/>
    </location>
</feature>